<feature type="signal peptide" evidence="2">
    <location>
        <begin position="1"/>
        <end position="18"/>
    </location>
</feature>
<feature type="chain" id="PRO_0000324499" description="Protein SOP4">
    <location>
        <begin position="19"/>
        <end position="234"/>
    </location>
</feature>
<feature type="topological domain" description="Lumenal" evidence="2">
    <location>
        <begin position="19"/>
        <end position="188"/>
    </location>
</feature>
<feature type="transmembrane region" description="Helical" evidence="2">
    <location>
        <begin position="189"/>
        <end position="209"/>
    </location>
</feature>
<feature type="topological domain" description="Cytoplasmic" evidence="2">
    <location>
        <begin position="210"/>
        <end position="234"/>
    </location>
</feature>
<feature type="glycosylation site" description="N-linked (GlcNAc...) asparagine" evidence="2">
    <location>
        <position position="35"/>
    </location>
</feature>
<feature type="glycosylation site" description="N-linked (GlcNAc...) asparagine" evidence="2">
    <location>
        <position position="53"/>
    </location>
</feature>
<feature type="glycosylation site" description="N-linked (GlcNAc...) asparagine" evidence="2">
    <location>
        <position position="85"/>
    </location>
</feature>
<feature type="glycosylation site" description="N-linked (GlcNAc...) asparagine" evidence="2">
    <location>
        <position position="115"/>
    </location>
</feature>
<feature type="glycosylation site" description="N-linked (GlcNAc...) asparagine" evidence="2">
    <location>
        <position position="170"/>
    </location>
</feature>
<accession>A6ZQE4</accession>
<protein>
    <recommendedName>
        <fullName>Protein SOP4</fullName>
    </recommendedName>
    <alternativeName>
        <fullName>Suppressor of PMA1-7 protein 4</fullName>
    </alternativeName>
</protein>
<sequence>MFSQIVLLLSAFIYVVSATARRGTIKGRLDLAASNITGFVSTRTSFKLYQIGNFSTEYPYTSTTMFQDDEGNFEFANLPLNDGVNETTYYVMYPASMDFNLKPNRILIEFKNLENGTLQLNAFKNFFGREYFPSKDITYPEKLQSMKVHPYITVELLHKAPIRSYLQARNVSIFSTGIVGNILNSRWKLAGVITLIALVVFPIIVEKLDPETARAIREEAKRKQREKYAAVASK</sequence>
<evidence type="ECO:0000250" key="1"/>
<evidence type="ECO:0000255" key="2"/>
<evidence type="ECO:0000305" key="3"/>
<gene>
    <name type="primary">SOP4</name>
    <name type="ORF">SCY_3105</name>
</gene>
<name>SOP4_YEAS7</name>
<organism>
    <name type="scientific">Saccharomyces cerevisiae (strain YJM789)</name>
    <name type="common">Baker's yeast</name>
    <dbReference type="NCBI Taxonomy" id="307796"/>
    <lineage>
        <taxon>Eukaryota</taxon>
        <taxon>Fungi</taxon>
        <taxon>Dikarya</taxon>
        <taxon>Ascomycota</taxon>
        <taxon>Saccharomycotina</taxon>
        <taxon>Saccharomycetes</taxon>
        <taxon>Saccharomycetales</taxon>
        <taxon>Saccharomycetaceae</taxon>
        <taxon>Saccharomyces</taxon>
    </lineage>
</organism>
<keyword id="KW-0256">Endoplasmic reticulum</keyword>
<keyword id="KW-0325">Glycoprotein</keyword>
<keyword id="KW-0472">Membrane</keyword>
<keyword id="KW-0653">Protein transport</keyword>
<keyword id="KW-0732">Signal</keyword>
<keyword id="KW-0812">Transmembrane</keyword>
<keyword id="KW-1133">Transmembrane helix</keyword>
<keyword id="KW-0813">Transport</keyword>
<dbReference type="EMBL" id="AAFW02000044">
    <property type="protein sequence ID" value="EDN63196.1"/>
    <property type="molecule type" value="Genomic_DNA"/>
</dbReference>
<dbReference type="SMR" id="A6ZQE4"/>
<dbReference type="GlyCosmos" id="A6ZQE4">
    <property type="glycosylation" value="5 sites, No reported glycans"/>
</dbReference>
<dbReference type="HOGENOM" id="CLU_102669_0_0_1"/>
<dbReference type="Proteomes" id="UP000007060">
    <property type="component" value="Unassembled WGS sequence"/>
</dbReference>
<dbReference type="GO" id="GO:0005789">
    <property type="term" value="C:endoplasmic reticulum membrane"/>
    <property type="evidence" value="ECO:0007669"/>
    <property type="project" value="UniProtKB-SubCell"/>
</dbReference>
<dbReference type="GO" id="GO:0015031">
    <property type="term" value="P:protein transport"/>
    <property type="evidence" value="ECO:0007669"/>
    <property type="project" value="UniProtKB-KW"/>
</dbReference>
<dbReference type="InterPro" id="IPR031395">
    <property type="entry name" value="Sop4"/>
</dbReference>
<dbReference type="Pfam" id="PF17081">
    <property type="entry name" value="SOP4"/>
    <property type="match status" value="1"/>
</dbReference>
<proteinExistence type="inferred from homology"/>
<comment type="function">
    <text evidence="1">Involved in the export of PMA1, possibly through the monitoring or assisting of PMA1 folding and acquisition of competence to enter vesicles.</text>
</comment>
<comment type="subcellular location">
    <subcellularLocation>
        <location evidence="1">Endoplasmic reticulum membrane</location>
        <topology evidence="1">Single-pass type I membrane protein</topology>
    </subcellularLocation>
</comment>
<comment type="similarity">
    <text evidence="3">Belongs to the SOP4 family.</text>
</comment>
<reference key="1">
    <citation type="journal article" date="2007" name="Proc. Natl. Acad. Sci. U.S.A.">
        <title>Genome sequencing and comparative analysis of Saccharomyces cerevisiae strain YJM789.</title>
        <authorList>
            <person name="Wei W."/>
            <person name="McCusker J.H."/>
            <person name="Hyman R.W."/>
            <person name="Jones T."/>
            <person name="Ning Y."/>
            <person name="Cao Z."/>
            <person name="Gu Z."/>
            <person name="Bruno D."/>
            <person name="Miranda M."/>
            <person name="Nguyen M."/>
            <person name="Wilhelmy J."/>
            <person name="Komp C."/>
            <person name="Tamse R."/>
            <person name="Wang X."/>
            <person name="Jia P."/>
            <person name="Luedi P."/>
            <person name="Oefner P.J."/>
            <person name="David L."/>
            <person name="Dietrich F.S."/>
            <person name="Li Y."/>
            <person name="Davis R.W."/>
            <person name="Steinmetz L.M."/>
        </authorList>
    </citation>
    <scope>NUCLEOTIDE SEQUENCE [LARGE SCALE GENOMIC DNA]</scope>
    <source>
        <strain>YJM789</strain>
    </source>
</reference>